<reference key="1">
    <citation type="journal article" date="2011" name="BMC Genomics">
        <title>Complete genome sequence of the filamentous anoxygenic phototrophic bacterium Chloroflexus aurantiacus.</title>
        <authorList>
            <person name="Tang K.H."/>
            <person name="Barry K."/>
            <person name="Chertkov O."/>
            <person name="Dalin E."/>
            <person name="Han C.S."/>
            <person name="Hauser L.J."/>
            <person name="Honchak B.M."/>
            <person name="Karbach L.E."/>
            <person name="Land M.L."/>
            <person name="Lapidus A."/>
            <person name="Larimer F.W."/>
            <person name="Mikhailova N."/>
            <person name="Pitluck S."/>
            <person name="Pierson B.K."/>
            <person name="Blankenship R.E."/>
        </authorList>
    </citation>
    <scope>NUCLEOTIDE SEQUENCE [LARGE SCALE GENOMIC DNA]</scope>
    <source>
        <strain>ATCC 29366 / DSM 635 / J-10-fl</strain>
    </source>
</reference>
<dbReference type="EC" id="6.1.1.7" evidence="1"/>
<dbReference type="EMBL" id="CP000909">
    <property type="protein sequence ID" value="ABY37024.1"/>
    <property type="molecule type" value="Genomic_DNA"/>
</dbReference>
<dbReference type="RefSeq" id="WP_012259677.1">
    <property type="nucleotide sequence ID" value="NC_010175.1"/>
</dbReference>
<dbReference type="RefSeq" id="YP_001637413.1">
    <property type="nucleotide sequence ID" value="NC_010175.1"/>
</dbReference>
<dbReference type="SMR" id="A9WCR2"/>
<dbReference type="FunCoup" id="A9WCR2">
    <property type="interactions" value="501"/>
</dbReference>
<dbReference type="STRING" id="324602.Caur_3847"/>
<dbReference type="EnsemblBacteria" id="ABY37024">
    <property type="protein sequence ID" value="ABY37024"/>
    <property type="gene ID" value="Caur_3847"/>
</dbReference>
<dbReference type="KEGG" id="cau:Caur_3847"/>
<dbReference type="PATRIC" id="fig|324602.8.peg.4320"/>
<dbReference type="eggNOG" id="COG0013">
    <property type="taxonomic scope" value="Bacteria"/>
</dbReference>
<dbReference type="HOGENOM" id="CLU_004485_1_1_0"/>
<dbReference type="InParanoid" id="A9WCR2"/>
<dbReference type="Proteomes" id="UP000002008">
    <property type="component" value="Chromosome"/>
</dbReference>
<dbReference type="GO" id="GO:0005829">
    <property type="term" value="C:cytosol"/>
    <property type="evidence" value="ECO:0000318"/>
    <property type="project" value="GO_Central"/>
</dbReference>
<dbReference type="GO" id="GO:0004813">
    <property type="term" value="F:alanine-tRNA ligase activity"/>
    <property type="evidence" value="ECO:0000318"/>
    <property type="project" value="GO_Central"/>
</dbReference>
<dbReference type="GO" id="GO:0002161">
    <property type="term" value="F:aminoacyl-tRNA deacylase activity"/>
    <property type="evidence" value="ECO:0000318"/>
    <property type="project" value="GO_Central"/>
</dbReference>
<dbReference type="GO" id="GO:0005524">
    <property type="term" value="F:ATP binding"/>
    <property type="evidence" value="ECO:0007669"/>
    <property type="project" value="UniProtKB-UniRule"/>
</dbReference>
<dbReference type="GO" id="GO:0000049">
    <property type="term" value="F:tRNA binding"/>
    <property type="evidence" value="ECO:0007669"/>
    <property type="project" value="UniProtKB-KW"/>
</dbReference>
<dbReference type="GO" id="GO:0008270">
    <property type="term" value="F:zinc ion binding"/>
    <property type="evidence" value="ECO:0007669"/>
    <property type="project" value="UniProtKB-UniRule"/>
</dbReference>
<dbReference type="GO" id="GO:0006419">
    <property type="term" value="P:alanyl-tRNA aminoacylation"/>
    <property type="evidence" value="ECO:0000318"/>
    <property type="project" value="GO_Central"/>
</dbReference>
<dbReference type="CDD" id="cd00673">
    <property type="entry name" value="AlaRS_core"/>
    <property type="match status" value="1"/>
</dbReference>
<dbReference type="FunFam" id="2.40.30.130:FF:000011">
    <property type="entry name" value="Alanine--tRNA ligase"/>
    <property type="match status" value="1"/>
</dbReference>
<dbReference type="FunFam" id="3.10.310.40:FF:000001">
    <property type="entry name" value="Alanine--tRNA ligase"/>
    <property type="match status" value="1"/>
</dbReference>
<dbReference type="FunFam" id="3.30.930.10:FF:000004">
    <property type="entry name" value="Alanine--tRNA ligase"/>
    <property type="match status" value="1"/>
</dbReference>
<dbReference type="FunFam" id="3.30.980.10:FF:000004">
    <property type="entry name" value="Alanine--tRNA ligase, cytoplasmic"/>
    <property type="match status" value="1"/>
</dbReference>
<dbReference type="Gene3D" id="2.40.30.130">
    <property type="match status" value="1"/>
</dbReference>
<dbReference type="Gene3D" id="3.10.310.40">
    <property type="match status" value="1"/>
</dbReference>
<dbReference type="Gene3D" id="3.30.54.20">
    <property type="match status" value="1"/>
</dbReference>
<dbReference type="Gene3D" id="6.10.250.550">
    <property type="match status" value="1"/>
</dbReference>
<dbReference type="Gene3D" id="3.30.930.10">
    <property type="entry name" value="Bira Bifunctional Protein, Domain 2"/>
    <property type="match status" value="1"/>
</dbReference>
<dbReference type="Gene3D" id="3.30.980.10">
    <property type="entry name" value="Threonyl-trna Synthetase, Chain A, domain 2"/>
    <property type="match status" value="1"/>
</dbReference>
<dbReference type="HAMAP" id="MF_00036_B">
    <property type="entry name" value="Ala_tRNA_synth_B"/>
    <property type="match status" value="1"/>
</dbReference>
<dbReference type="InterPro" id="IPR045864">
    <property type="entry name" value="aa-tRNA-synth_II/BPL/LPL"/>
</dbReference>
<dbReference type="InterPro" id="IPR002318">
    <property type="entry name" value="Ala-tRNA-lgiase_IIc"/>
</dbReference>
<dbReference type="InterPro" id="IPR018162">
    <property type="entry name" value="Ala-tRNA-ligase_IIc_anticod-bd"/>
</dbReference>
<dbReference type="InterPro" id="IPR018165">
    <property type="entry name" value="Ala-tRNA-synth_IIc_core"/>
</dbReference>
<dbReference type="InterPro" id="IPR018164">
    <property type="entry name" value="Ala-tRNA-synth_IIc_N"/>
</dbReference>
<dbReference type="InterPro" id="IPR050058">
    <property type="entry name" value="Ala-tRNA_ligase"/>
</dbReference>
<dbReference type="InterPro" id="IPR023033">
    <property type="entry name" value="Ala_tRNA_ligase_euk/bac"/>
</dbReference>
<dbReference type="InterPro" id="IPR003156">
    <property type="entry name" value="DHHA1_dom"/>
</dbReference>
<dbReference type="InterPro" id="IPR018163">
    <property type="entry name" value="Thr/Ala-tRNA-synth_IIc_edit"/>
</dbReference>
<dbReference type="InterPro" id="IPR009000">
    <property type="entry name" value="Transl_B-barrel_sf"/>
</dbReference>
<dbReference type="InterPro" id="IPR012947">
    <property type="entry name" value="tRNA_SAD"/>
</dbReference>
<dbReference type="NCBIfam" id="TIGR00344">
    <property type="entry name" value="alaS"/>
    <property type="match status" value="1"/>
</dbReference>
<dbReference type="PANTHER" id="PTHR11777:SF9">
    <property type="entry name" value="ALANINE--TRNA LIGASE, CYTOPLASMIC"/>
    <property type="match status" value="1"/>
</dbReference>
<dbReference type="PANTHER" id="PTHR11777">
    <property type="entry name" value="ALANYL-TRNA SYNTHETASE"/>
    <property type="match status" value="1"/>
</dbReference>
<dbReference type="Pfam" id="PF02272">
    <property type="entry name" value="DHHA1"/>
    <property type="match status" value="1"/>
</dbReference>
<dbReference type="Pfam" id="PF01411">
    <property type="entry name" value="tRNA-synt_2c"/>
    <property type="match status" value="1"/>
</dbReference>
<dbReference type="Pfam" id="PF07973">
    <property type="entry name" value="tRNA_SAD"/>
    <property type="match status" value="1"/>
</dbReference>
<dbReference type="PRINTS" id="PR00980">
    <property type="entry name" value="TRNASYNTHALA"/>
</dbReference>
<dbReference type="SMART" id="SM00863">
    <property type="entry name" value="tRNA_SAD"/>
    <property type="match status" value="1"/>
</dbReference>
<dbReference type="SUPFAM" id="SSF55681">
    <property type="entry name" value="Class II aaRS and biotin synthetases"/>
    <property type="match status" value="1"/>
</dbReference>
<dbReference type="SUPFAM" id="SSF101353">
    <property type="entry name" value="Putative anticodon-binding domain of alanyl-tRNA synthetase (AlaRS)"/>
    <property type="match status" value="1"/>
</dbReference>
<dbReference type="SUPFAM" id="SSF55186">
    <property type="entry name" value="ThrRS/AlaRS common domain"/>
    <property type="match status" value="1"/>
</dbReference>
<dbReference type="SUPFAM" id="SSF50447">
    <property type="entry name" value="Translation proteins"/>
    <property type="match status" value="1"/>
</dbReference>
<dbReference type="PROSITE" id="PS50860">
    <property type="entry name" value="AA_TRNA_LIGASE_II_ALA"/>
    <property type="match status" value="1"/>
</dbReference>
<organism>
    <name type="scientific">Chloroflexus aurantiacus (strain ATCC 29366 / DSM 635 / J-10-fl)</name>
    <dbReference type="NCBI Taxonomy" id="324602"/>
    <lineage>
        <taxon>Bacteria</taxon>
        <taxon>Bacillati</taxon>
        <taxon>Chloroflexota</taxon>
        <taxon>Chloroflexia</taxon>
        <taxon>Chloroflexales</taxon>
        <taxon>Chloroflexineae</taxon>
        <taxon>Chloroflexaceae</taxon>
        <taxon>Chloroflexus</taxon>
    </lineage>
</organism>
<protein>
    <recommendedName>
        <fullName evidence="1">Alanine--tRNA ligase</fullName>
        <ecNumber evidence="1">6.1.1.7</ecNumber>
    </recommendedName>
    <alternativeName>
        <fullName evidence="1">Alanyl-tRNA synthetase</fullName>
        <shortName evidence="1">AlaRS</shortName>
    </alternativeName>
</protein>
<comment type="function">
    <text evidence="1">Catalyzes the attachment of alanine to tRNA(Ala) in a two-step reaction: alanine is first activated by ATP to form Ala-AMP and then transferred to the acceptor end of tRNA(Ala). Also edits incorrectly charged Ser-tRNA(Ala) and Gly-tRNA(Ala) via its editing domain.</text>
</comment>
<comment type="catalytic activity">
    <reaction evidence="1">
        <text>tRNA(Ala) + L-alanine + ATP = L-alanyl-tRNA(Ala) + AMP + diphosphate</text>
        <dbReference type="Rhea" id="RHEA:12540"/>
        <dbReference type="Rhea" id="RHEA-COMP:9657"/>
        <dbReference type="Rhea" id="RHEA-COMP:9923"/>
        <dbReference type="ChEBI" id="CHEBI:30616"/>
        <dbReference type="ChEBI" id="CHEBI:33019"/>
        <dbReference type="ChEBI" id="CHEBI:57972"/>
        <dbReference type="ChEBI" id="CHEBI:78442"/>
        <dbReference type="ChEBI" id="CHEBI:78497"/>
        <dbReference type="ChEBI" id="CHEBI:456215"/>
        <dbReference type="EC" id="6.1.1.7"/>
    </reaction>
</comment>
<comment type="cofactor">
    <cofactor evidence="1">
        <name>Zn(2+)</name>
        <dbReference type="ChEBI" id="CHEBI:29105"/>
    </cofactor>
    <text evidence="1">Binds 1 zinc ion per subunit.</text>
</comment>
<comment type="subcellular location">
    <subcellularLocation>
        <location evidence="1">Cytoplasm</location>
    </subcellularLocation>
</comment>
<comment type="domain">
    <text evidence="1">Consists of three domains; the N-terminal catalytic domain, the editing domain and the C-terminal C-Ala domain. The editing domain removes incorrectly charged amino acids, while the C-Ala domain, along with tRNA(Ala), serves as a bridge to cooperatively bring together the editing and aminoacylation centers thus stimulating deacylation of misacylated tRNAs.</text>
</comment>
<comment type="similarity">
    <text evidence="1">Belongs to the class-II aminoacyl-tRNA synthetase family.</text>
</comment>
<feature type="chain" id="PRO_0000347553" description="Alanine--tRNA ligase">
    <location>
        <begin position="1"/>
        <end position="894"/>
    </location>
</feature>
<feature type="binding site" evidence="1">
    <location>
        <position position="569"/>
    </location>
    <ligand>
        <name>Zn(2+)</name>
        <dbReference type="ChEBI" id="CHEBI:29105"/>
    </ligand>
</feature>
<feature type="binding site" evidence="1">
    <location>
        <position position="573"/>
    </location>
    <ligand>
        <name>Zn(2+)</name>
        <dbReference type="ChEBI" id="CHEBI:29105"/>
    </ligand>
</feature>
<feature type="binding site" evidence="1">
    <location>
        <position position="683"/>
    </location>
    <ligand>
        <name>Zn(2+)</name>
        <dbReference type="ChEBI" id="CHEBI:29105"/>
    </ligand>
</feature>
<feature type="binding site" evidence="1">
    <location>
        <position position="687"/>
    </location>
    <ligand>
        <name>Zn(2+)</name>
        <dbReference type="ChEBI" id="CHEBI:29105"/>
    </ligand>
</feature>
<proteinExistence type="inferred from homology"/>
<keyword id="KW-0030">Aminoacyl-tRNA synthetase</keyword>
<keyword id="KW-0067">ATP-binding</keyword>
<keyword id="KW-0963">Cytoplasm</keyword>
<keyword id="KW-0436">Ligase</keyword>
<keyword id="KW-0479">Metal-binding</keyword>
<keyword id="KW-0547">Nucleotide-binding</keyword>
<keyword id="KW-0648">Protein biosynthesis</keyword>
<keyword id="KW-1185">Reference proteome</keyword>
<keyword id="KW-0694">RNA-binding</keyword>
<keyword id="KW-0820">tRNA-binding</keyword>
<keyword id="KW-0862">Zinc</keyword>
<evidence type="ECO:0000255" key="1">
    <source>
        <dbReference type="HAMAP-Rule" id="MF_00036"/>
    </source>
</evidence>
<gene>
    <name evidence="1" type="primary">alaS</name>
    <name type="ordered locus">Caur_3847</name>
</gene>
<name>SYA_CHLAA</name>
<accession>A9WCR2</accession>
<sequence length="894" mass="98147">MQKLTAAQIRETFLSFFIRHGHTHVPSSSLVVADDPTLLFANSGMVQFKDVFLGREQRPYSRAVTAQKCLRVSGKHNDLEEVGPSPRHHTFFEMLGNFSFGDYFKAEAIALAWKLLTEEFKLPVERLWFTVFAGDDEVPPDDEAAALWIAQGADPSRVLRFGRKDNFWVMGDTGPCGPCSEITMYIGDDLSQMRAEGVNSDDPNYVEIWNNVFMQYDRATMQPLPRPSVDTGMGLERMAMVMQGVHSTYETDLFVAIINQIIKTRGSDEEHYHAHRSAYRAIADHARAIAFLIADGVLPGNLGRSYVLRRILRRAAYQGRTIGFERPFLADVITSVIEQMGEAYPELVKRRELILSAADQEERQFLRTLSGGLTRLQGVIEQVRARGEQVIPGNDAFVLKDTYGFPLDLTQKIAAEQGLTVDEAGYEAAMAEQRARSRAAAASKRGGEADLWADLDLPASHFTGYERLSDRATVIGMLGDGDALTSADTGRSVQIVLDTTPFYAESGGQIGDTGLLVGPEGSVQIEDTRRPLPGLIVHYGRVVNGRISVGDQVQATVDVVRRADIQRNHTATHMLQRALRDVLGEHAAQAGSLVAPDRLRFDFTHTKAVDPEELREVEQRLNKWVRADTTVRWEITGYQDAMARGAIALFGEKYGDTVRLVTIERGQTLAEGEFASRDSLELCGGTHVNHTGEIGFVRIVSEGSIGSGIRRIEALTGRGAEGWVEQQAQTLRELAARINTQPAQLLERIDALLAEHRQRKQELEALRSKLAREQLDLLLGRVQHVAGVPLLAAEVEADSVDRLREMGEYLRDKLGNAVIVLGAQINGKPQLLTIVTPDLVRRGLNAVQLVKPLAALVGGGGGGRPEIAQAGGRHPDKLAAAIGAAVEVLAGQAG</sequence>